<proteinExistence type="evidence at protein level"/>
<protein>
    <recommendedName>
        <fullName evidence="13">Non-canonical non-ribosomal peptide synthetase FUB8</fullName>
        <ecNumber evidence="14">2.3.1.-</ecNumber>
    </recommendedName>
    <alternativeName>
        <fullName evidence="13">Fusaric acid biosynthesis protein 8</fullName>
    </alternativeName>
</protein>
<dbReference type="EC" id="2.3.1.-" evidence="14"/>
<dbReference type="EMBL" id="CM000580">
    <property type="protein sequence ID" value="EWG54274.1"/>
    <property type="molecule type" value="Genomic_DNA"/>
</dbReference>
<dbReference type="RefSeq" id="XP_018760465.1">
    <property type="nucleotide sequence ID" value="XM_018901870.1"/>
</dbReference>
<dbReference type="SMR" id="W7N2C1"/>
<dbReference type="STRING" id="334819.W7N2C1"/>
<dbReference type="GeneID" id="30069963"/>
<dbReference type="KEGG" id="fvr:FVEG_12530"/>
<dbReference type="VEuPathDB" id="FungiDB:FVEG_12530"/>
<dbReference type="eggNOG" id="KOG1178">
    <property type="taxonomic scope" value="Eukaryota"/>
</dbReference>
<dbReference type="OrthoDB" id="107292at110618"/>
<dbReference type="PHI-base" id="PHI:3384"/>
<dbReference type="Proteomes" id="UP000009096">
    <property type="component" value="Chromosome 3"/>
</dbReference>
<dbReference type="GO" id="GO:0016491">
    <property type="term" value="F:oxidoreductase activity"/>
    <property type="evidence" value="ECO:0007669"/>
    <property type="project" value="UniProtKB-KW"/>
</dbReference>
<dbReference type="GO" id="GO:0016740">
    <property type="term" value="F:transferase activity"/>
    <property type="evidence" value="ECO:0007669"/>
    <property type="project" value="UniProtKB-KW"/>
</dbReference>
<dbReference type="Gene3D" id="1.10.1200.10">
    <property type="entry name" value="ACP-like"/>
    <property type="match status" value="1"/>
</dbReference>
<dbReference type="Gene3D" id="3.40.50.12780">
    <property type="entry name" value="N-terminal domain of ligase-like"/>
    <property type="match status" value="1"/>
</dbReference>
<dbReference type="Gene3D" id="3.40.50.720">
    <property type="entry name" value="NAD(P)-binding Rossmann-like Domain"/>
    <property type="match status" value="1"/>
</dbReference>
<dbReference type="InterPro" id="IPR036736">
    <property type="entry name" value="ACP-like_sf"/>
</dbReference>
<dbReference type="InterPro" id="IPR051414">
    <property type="entry name" value="Adenylate-forming_Reductase"/>
</dbReference>
<dbReference type="InterPro" id="IPR020845">
    <property type="entry name" value="AMP-binding_CS"/>
</dbReference>
<dbReference type="InterPro" id="IPR000873">
    <property type="entry name" value="AMP-dep_synth/lig_dom"/>
</dbReference>
<dbReference type="InterPro" id="IPR042099">
    <property type="entry name" value="ANL_N_sf"/>
</dbReference>
<dbReference type="InterPro" id="IPR013120">
    <property type="entry name" value="Far_NAD-bd"/>
</dbReference>
<dbReference type="InterPro" id="IPR036291">
    <property type="entry name" value="NAD(P)-bd_dom_sf"/>
</dbReference>
<dbReference type="InterPro" id="IPR009081">
    <property type="entry name" value="PP-bd_ACP"/>
</dbReference>
<dbReference type="PANTHER" id="PTHR43439:SF2">
    <property type="entry name" value="ENZYME, PUTATIVE (JCVI)-RELATED"/>
    <property type="match status" value="1"/>
</dbReference>
<dbReference type="PANTHER" id="PTHR43439">
    <property type="entry name" value="PHENYLACETATE-COENZYME A LIGASE"/>
    <property type="match status" value="1"/>
</dbReference>
<dbReference type="Pfam" id="PF00501">
    <property type="entry name" value="AMP-binding"/>
    <property type="match status" value="1"/>
</dbReference>
<dbReference type="Pfam" id="PF23562">
    <property type="entry name" value="AMP-binding_C_3"/>
    <property type="match status" value="1"/>
</dbReference>
<dbReference type="Pfam" id="PF07993">
    <property type="entry name" value="NAD_binding_4"/>
    <property type="match status" value="1"/>
</dbReference>
<dbReference type="Pfam" id="PF00550">
    <property type="entry name" value="PP-binding"/>
    <property type="match status" value="1"/>
</dbReference>
<dbReference type="SUPFAM" id="SSF56801">
    <property type="entry name" value="Acetyl-CoA synthetase-like"/>
    <property type="match status" value="1"/>
</dbReference>
<dbReference type="SUPFAM" id="SSF47336">
    <property type="entry name" value="ACP-like"/>
    <property type="match status" value="1"/>
</dbReference>
<dbReference type="SUPFAM" id="SSF51735">
    <property type="entry name" value="NAD(P)-binding Rossmann-fold domains"/>
    <property type="match status" value="1"/>
</dbReference>
<dbReference type="PROSITE" id="PS00455">
    <property type="entry name" value="AMP_BINDING"/>
    <property type="match status" value="1"/>
</dbReference>
<dbReference type="PROSITE" id="PS50075">
    <property type="entry name" value="CARRIER"/>
    <property type="match status" value="1"/>
</dbReference>
<accession>W7N2C1</accession>
<name>FUB8_GIBM7</name>
<comment type="function">
    <text evidence="1 12">Non-canonical non-ribosomal peptide synthetase; part of the gene cluster that mediates the biosynthesis of fusaric acid, a mycotoxin with low to moderate toxicity to animals and humans, but with high phytotoxic properties (PubMed:25372119). L-aspartate is suggested as fusaric acid amino acid precursor that is activated and further processed to O-acetyl-L-homoserine by cluster enzymes aspartate kinase FUB3 and homoserine O-acetyltransferase FUB5, as well as enzymes of the primary metabolism (By similarity). The polyketide synthase (PKS) FUB1 generates the triketide trans-2-hexenal which is presumptively released by the hydrolase FUB4 and linked to the NRPS-bound amino acid precursor by NAD(P)-dependent dehydrogenase FUB6 (By similarity). FUB1, FUB4, and the non-canonical NRPS Fub8 may form an enzyme complex (By similarity). Further processing of the NRPS-bound intermediate might be carried out by FUB6 and the sulfhydrylase FUB7, enabling a spontaneous electrocyclization to close the carbon backbone of fusaric acid (By similarity). Dihydrofusaric acid is likely to be released via reduction by the thioester reductase (TR) domain of FUB8 whereupon the final oxidation to fusaric acid may (also) be performed by the FMN-dependent dehydrogenase FUB9 (By similarity).</text>
</comment>
<comment type="pathway">
    <text evidence="12">Mycotoxin biosynthesis.</text>
</comment>
<comment type="induction">
    <text evidence="8 12">Expression is positively regulated by the fusaric acid cluster specific transcription factor FUB10 (PubMed:25372119). Expression is also positively regulated by the secondary metabolism regulator LAE1 (PubMed:22713715).</text>
</comment>
<comment type="domain">
    <text evidence="1">Contains three distinct domains: an adenylation (A) domain that activates the substrate amino acid which is subsequently covalently linked as a thioester (aminoacyl-S-PCP) to the 4'-phosphopantetheine prosthetic group of the second domain, the peptidyl carrier protein (PCP) domain, as well as a thioester reductase (TR) release domain.</text>
</comment>
<comment type="biotechnology">
    <text evidence="4 5 6 7 9 10 11">Fusaric acid is phytotoxic to plants such as cotton and banana (PubMed:20955724, PubMed:23922960). It has been shown to induce programmed cell death in plants (PubMed:16868776, PubMed:23838885). In addition to a mild toxicity to animals, fusaric acid exhibits acanthamoebicidal, antioomycete, and antimycobacterial activities (PubMed:17927749, PubMed:21811925, PubMed:22864988).</text>
</comment>
<reference key="1">
    <citation type="journal article" date="2010" name="Nature">
        <title>Comparative genomics reveals mobile pathogenicity chromosomes in Fusarium.</title>
        <authorList>
            <person name="Ma L.-J."/>
            <person name="van der Does H.C."/>
            <person name="Borkovich K.A."/>
            <person name="Coleman J.J."/>
            <person name="Daboussi M.-J."/>
            <person name="Di Pietro A."/>
            <person name="Dufresne M."/>
            <person name="Freitag M."/>
            <person name="Grabherr M."/>
            <person name="Henrissat B."/>
            <person name="Houterman P.M."/>
            <person name="Kang S."/>
            <person name="Shim W.-B."/>
            <person name="Woloshuk C."/>
            <person name="Xie X."/>
            <person name="Xu J.-R."/>
            <person name="Antoniw J."/>
            <person name="Baker S.E."/>
            <person name="Bluhm B.H."/>
            <person name="Breakspear A."/>
            <person name="Brown D.W."/>
            <person name="Butchko R.A.E."/>
            <person name="Chapman S."/>
            <person name="Coulson R."/>
            <person name="Coutinho P.M."/>
            <person name="Danchin E.G.J."/>
            <person name="Diener A."/>
            <person name="Gale L.R."/>
            <person name="Gardiner D.M."/>
            <person name="Goff S."/>
            <person name="Hammond-Kosack K.E."/>
            <person name="Hilburn K."/>
            <person name="Hua-Van A."/>
            <person name="Jonkers W."/>
            <person name="Kazan K."/>
            <person name="Kodira C.D."/>
            <person name="Koehrsen M."/>
            <person name="Kumar L."/>
            <person name="Lee Y.-H."/>
            <person name="Li L."/>
            <person name="Manners J.M."/>
            <person name="Miranda-Saavedra D."/>
            <person name="Mukherjee M."/>
            <person name="Park G."/>
            <person name="Park J."/>
            <person name="Park S.-Y."/>
            <person name="Proctor R.H."/>
            <person name="Regev A."/>
            <person name="Ruiz-Roldan M.C."/>
            <person name="Sain D."/>
            <person name="Sakthikumar S."/>
            <person name="Sykes S."/>
            <person name="Schwartz D.C."/>
            <person name="Turgeon B.G."/>
            <person name="Wapinski I."/>
            <person name="Yoder O."/>
            <person name="Young S."/>
            <person name="Zeng Q."/>
            <person name="Zhou S."/>
            <person name="Galagan J."/>
            <person name="Cuomo C.A."/>
            <person name="Kistler H.C."/>
            <person name="Rep M."/>
        </authorList>
    </citation>
    <scope>NUCLEOTIDE SEQUENCE [LARGE SCALE GENOMIC DNA]</scope>
    <source>
        <strain>M3125 / FGSC 7600</strain>
    </source>
</reference>
<reference key="2">
    <citation type="journal article" date="2006" name="Planta">
        <title>Fusaric acid induces apoptosis in saffron root-tip cells: roles of caspase-like activity, cytochrome c, and H2O2.</title>
        <authorList>
            <person name="Samadi L."/>
            <person name="Shahsavan Behboodi B."/>
        </authorList>
    </citation>
    <scope>BIOTECHNOLOGY</scope>
</reference>
<reference key="3">
    <citation type="journal article" date="2008" name="J. Appl. Microbiol.">
        <title>Bikaverin and fusaric acid from Fusarium oxysporum show antioomycete activity against Phytophthora infestans.</title>
        <authorList>
            <person name="Son S.W."/>
            <person name="Kim H.Y."/>
            <person name="Choi G.J."/>
            <person name="Lim H.K."/>
            <person name="Jang K.S."/>
            <person name="Lee S.O."/>
            <person name="Lee S."/>
            <person name="Sung N.D."/>
            <person name="Kim J.C."/>
        </authorList>
    </citation>
    <scope>BIOTECHNOLOGY</scope>
</reference>
<reference key="4">
    <citation type="journal article" date="2011" name="Arch. Pharm. Res.">
        <title>Antimycobacterial activity of fusaric acid from a mangrove endophyte and its metal complexes.</title>
        <authorList>
            <person name="Pan J.H."/>
            <person name="Chen Y."/>
            <person name="Huang Y.H."/>
            <person name="Tao Y.W."/>
            <person name="Wang J."/>
            <person name="Li Y."/>
            <person name="Peng Y."/>
            <person name="Dong T."/>
            <person name="Lai X.M."/>
            <person name="Lin Y.C."/>
        </authorList>
    </citation>
    <scope>BIOTECHNOLOGY</scope>
</reference>
<reference key="5">
    <citation type="journal article" date="2011" name="Toxicon">
        <title>Phytotoxicity of fusaric acid and analogs to cotton.</title>
        <authorList>
            <person name="Stipanovic R.D."/>
            <person name="Puckhaber L.S."/>
            <person name="Liu J."/>
            <person name="Bell A.A."/>
        </authorList>
    </citation>
    <scope>BIOTECHNOLOGY</scope>
</reference>
<reference key="6">
    <citation type="journal article" date="2012" name="Fungal Genet. Biol.">
        <title>Lae1 regulates expression of multiple secondary metabolite gene clusters in Fusarium verticillioides.</title>
        <authorList>
            <person name="Butchko R.A."/>
            <person name="Brown D.W."/>
            <person name="Busman M."/>
            <person name="Tudzynski B."/>
            <person name="Wiemann P."/>
        </authorList>
    </citation>
    <scope>INDUCTION</scope>
</reference>
<reference key="7">
    <citation type="journal article" date="2012" name="Planta Med.">
        <title>In vitro acanthamoebicidal activity of fusaric acid and dehydrofusaric acid from an endophytic fungus Fusarium sp. Tlau3.</title>
        <authorList>
            <person name="Boonman N."/>
            <person name="Prachya S."/>
            <person name="Boonmee A."/>
            <person name="Kittakoop P."/>
            <person name="Wiyakrutta S."/>
            <person name="Sriubolmas N."/>
            <person name="Warit S."/>
            <person name="Dharmkrong-At Chusattayanond A."/>
        </authorList>
    </citation>
    <scope>BIOTECHNOLOGY</scope>
</reference>
<reference key="8">
    <citation type="journal article" date="2013" name="Planta">
        <title>Fusaric acid induction of programmed cell death modulated through nitric oxide signalling in tobacco suspension cells.</title>
        <authorList>
            <person name="Jiao J."/>
            <person name="Zhou B."/>
            <person name="Zhu X."/>
            <person name="Gao Z."/>
            <person name="Liang Y."/>
        </authorList>
    </citation>
    <scope>BIOTECHNOLOGY</scope>
</reference>
<reference key="9">
    <citation type="journal article" date="2013" name="PLoS ONE">
        <title>Contamination of bananas with beauvericin and fusaric acid produced by Fusarium oxysporum f. sp. cubense.</title>
        <authorList>
            <person name="Li C."/>
            <person name="Zuo C."/>
            <person name="Deng G."/>
            <person name="Kuang R."/>
            <person name="Yang Q."/>
            <person name="Hu C."/>
            <person name="Sheng O."/>
            <person name="Zhang S."/>
            <person name="Ma L."/>
            <person name="Wei Y."/>
            <person name="Yang J."/>
            <person name="Liu S."/>
            <person name="Biswas M.K."/>
            <person name="Viljoen A."/>
            <person name="Yi G."/>
        </authorList>
    </citation>
    <scope>BIOTECHNOLOGY</scope>
</reference>
<reference key="10">
    <citation type="journal article" date="2015" name="Mol. Plant Microbe Interact.">
        <title>Identification of a 12-gene fusaric acid biosynthetic gene cluster in Fusarium species through comparative and functional genomics.</title>
        <authorList>
            <person name="Brown D.W."/>
            <person name="Lee S.H."/>
            <person name="Kim L.H."/>
            <person name="Ryu J.G."/>
            <person name="Lee S."/>
            <person name="Seo Y."/>
            <person name="Kim Y.H."/>
            <person name="Busman M."/>
            <person name="Yun S.H."/>
            <person name="Proctor R.H."/>
            <person name="Lee T."/>
        </authorList>
    </citation>
    <scope>FUNCTION</scope>
    <scope>INDUCTION</scope>
</reference>
<keyword id="KW-0511">Multifunctional enzyme</keyword>
<keyword id="KW-0521">NADP</keyword>
<keyword id="KW-0560">Oxidoreductase</keyword>
<keyword id="KW-0596">Phosphopantetheine</keyword>
<keyword id="KW-0597">Phosphoprotein</keyword>
<keyword id="KW-1185">Reference proteome</keyword>
<keyword id="KW-0808">Transferase</keyword>
<sequence>MQKIAKQALSSLSSLAKSPANAMGSISHLPAYGHRLLPVLIDEISRDEPDRVLFYTPRNGQPSQGYDEVTTKIFANAIDRLCGWLDSQLGSPTVSKTIAYIGQNDLRYFIIMIASTKLGHRLLLSSPRNSVEGHVSLIKQSGCELWIASSGLGHHEFLQDLHIPSVEAPELSELLDPTLAKPYIYQKSWHEGKSDVLALLHTSGSTGLPKLVPVYLETAATVDGFHLMEPTDGKRPTGVEWTGTRQLCAMPLFHVAGICLGLYSAVFFNWIVVLPSVGPIMQHVIEDALDHISLDSAFISPSVLQDISKSSRVLEKLSKLKFITSAGGPIPQSVGDLIHPRVPIMQTMGMTEGQWLASVVMHPDEWAYYYFHPRTGVEMRPYSEDLFELVFVQNPKLSATQPVFKTFPDLDIWETKDLYSRHPKHPDLWKYEMRRDDLIILSNGEKFNPLAAEGKLISHPWIAAAYLTGRGRFQTAALIYPDDSSFNNSDDTIIDNIWPTFEEVNKSLPAFAQIHRDFVKIVRTPFPCTPKGTLARNETEKSFNADINAIYDRSTHGKPSVHINGTTEDVVRSGIREAIETVSGLVDLKDDDNIFTRGFDSLHVIRLAGLLSSAFYQPLEVEPGTIYTNPTISQLSHSVWTHLEYGPQDRIHHSEVTLEMLAKYIQAFEPPRESKEHIVLTGTTGEIGSYLLDDICKNDKVAKVWCLNRSVDAFQRQVDSAKSKGLSSNWQSKAKFVRYDVTSENLGLSQDDLEEIKNEATAIIHNAWEVNFNLPLSSFDPQFVGLQGLVDVCRATRHKIRFFFVSSISAAMNWPSDLLGPVPEASISRFDAPINGYGSSKLVAEHLLSKAARSGVLSLSVLRVGQVAGPVRTLGEGSIWTRRDWVPAIIDASVHLRALPLDLGSASILDWIPIDLLAEVIGQLVVPVNPVVGQENYYNLLNPRTPSWKDTLPGLKAHLEASFSEKFEIIPLQEWINRMRGAEKTIVKEVSEGSSETARRAQSGLKLLAFFETLASETEGSRGLEWSKANALAQSSILACMEPVSSAWFDTWLTQWGY</sequence>
<feature type="chain" id="PRO_0000437340" description="Non-canonical non-ribosomal peptide synthetase FUB8">
    <location>
        <begin position="1"/>
        <end position="1058"/>
    </location>
</feature>
<feature type="domain" description="Carrier" evidence="3">
    <location>
        <begin position="566"/>
        <end position="643"/>
    </location>
</feature>
<feature type="region of interest" description="Adenylation (A) domain" evidence="2">
    <location>
        <begin position="43"/>
        <end position="365"/>
    </location>
</feature>
<feature type="region of interest" description="Thioester reductase (TR) domain" evidence="2">
    <location>
        <begin position="680"/>
        <end position="921"/>
    </location>
</feature>
<feature type="modified residue" description="O-(pantetheine 4'-phosphoryl)serine" evidence="3">
    <location>
        <position position="601"/>
    </location>
</feature>
<organism>
    <name type="scientific">Gibberella moniliformis (strain M3125 / FGSC 7600)</name>
    <name type="common">Maize ear and stalk rot fungus</name>
    <name type="synonym">Fusarium verticillioides</name>
    <dbReference type="NCBI Taxonomy" id="334819"/>
    <lineage>
        <taxon>Eukaryota</taxon>
        <taxon>Fungi</taxon>
        <taxon>Dikarya</taxon>
        <taxon>Ascomycota</taxon>
        <taxon>Pezizomycotina</taxon>
        <taxon>Sordariomycetes</taxon>
        <taxon>Hypocreomycetidae</taxon>
        <taxon>Hypocreales</taxon>
        <taxon>Nectriaceae</taxon>
        <taxon>Fusarium</taxon>
        <taxon>Fusarium fujikuroi species complex</taxon>
    </lineage>
</organism>
<gene>
    <name evidence="13" type="primary">FUB8</name>
    <name type="ORF">FVEG_12530</name>
</gene>
<evidence type="ECO:0000250" key="1">
    <source>
        <dbReference type="UniProtKB" id="S0DXJ2"/>
    </source>
</evidence>
<evidence type="ECO:0000255" key="2"/>
<evidence type="ECO:0000255" key="3">
    <source>
        <dbReference type="PROSITE-ProRule" id="PRU00258"/>
    </source>
</evidence>
<evidence type="ECO:0000269" key="4">
    <source>
    </source>
</evidence>
<evidence type="ECO:0000269" key="5">
    <source>
    </source>
</evidence>
<evidence type="ECO:0000269" key="6">
    <source>
    </source>
</evidence>
<evidence type="ECO:0000269" key="7">
    <source>
    </source>
</evidence>
<evidence type="ECO:0000269" key="8">
    <source>
    </source>
</evidence>
<evidence type="ECO:0000269" key="9">
    <source>
    </source>
</evidence>
<evidence type="ECO:0000269" key="10">
    <source>
    </source>
</evidence>
<evidence type="ECO:0000269" key="11">
    <source>
    </source>
</evidence>
<evidence type="ECO:0000269" key="12">
    <source>
    </source>
</evidence>
<evidence type="ECO:0000303" key="13">
    <source>
    </source>
</evidence>
<evidence type="ECO:0000305" key="14">
    <source>
    </source>
</evidence>